<name>CAP8A_STAAU</name>
<sequence length="222" mass="24867">MESTLELTKIKEVLQKNLKILIILPLLFLIISAIVTFFVLSPKYQANTQILVNQTKGDNPQFMAQEVQSNIQLVNTYKEIVKSPRILDEVSKDLNNKYSPSKLSSMLTITNQENTQLINIQVKSGHKQDSEKIANSFAKVTSKQIPKIMSLDNVSILSKADGTAVKVAPKTVVNLIGAFFLGLVVALIYIFFKVIFDKRIKDEEDVEKELGLPVLGSIQKFN</sequence>
<evidence type="ECO:0000255" key="1"/>
<evidence type="ECO:0000269" key="2">
    <source>
    </source>
</evidence>
<evidence type="ECO:0000305" key="3"/>
<comment type="function">
    <text evidence="2">Required for the biosynthesis of type 8 capsular polysaccharide (Cap8/CP8). Might act as the chain-length regulator.</text>
</comment>
<comment type="subcellular location">
    <subcellularLocation>
        <location evidence="3">Cell membrane</location>
        <topology evidence="3">Multi-pass membrane protein</topology>
    </subcellularLocation>
</comment>
<comment type="similarity">
    <text evidence="3">Belongs to the CpsC/CapA family.</text>
</comment>
<protein>
    <recommendedName>
        <fullName>Capsular polysaccharide type 8 biosynthesis protein cap8A</fullName>
    </recommendedName>
</protein>
<accession>P72367</accession>
<gene>
    <name type="primary">cap8A</name>
</gene>
<keyword id="KW-0002">3D-structure</keyword>
<keyword id="KW-0972">Capsule biogenesis/degradation</keyword>
<keyword id="KW-1003">Cell membrane</keyword>
<keyword id="KW-0270">Exopolysaccharide synthesis</keyword>
<keyword id="KW-0472">Membrane</keyword>
<keyword id="KW-0812">Transmembrane</keyword>
<keyword id="KW-1133">Transmembrane helix</keyword>
<keyword id="KW-0843">Virulence</keyword>
<organism>
    <name type="scientific">Staphylococcus aureus</name>
    <dbReference type="NCBI Taxonomy" id="1280"/>
    <lineage>
        <taxon>Bacteria</taxon>
        <taxon>Bacillati</taxon>
        <taxon>Bacillota</taxon>
        <taxon>Bacilli</taxon>
        <taxon>Bacillales</taxon>
        <taxon>Staphylococcaceae</taxon>
        <taxon>Staphylococcus</taxon>
    </lineage>
</organism>
<feature type="chain" id="PRO_0000217225" description="Capsular polysaccharide type 8 biosynthesis protein cap8A">
    <location>
        <begin position="1"/>
        <end position="222"/>
    </location>
</feature>
<feature type="transmembrane region" description="Helical" evidence="1">
    <location>
        <begin position="20"/>
        <end position="40"/>
    </location>
</feature>
<feature type="transmembrane region" description="Helical" evidence="1">
    <location>
        <begin position="172"/>
        <end position="192"/>
    </location>
</feature>
<reference key="1">
    <citation type="journal article" date="1996" name="J. Bacteriol.">
        <title>Cloning of type 8 capsule genes and analysis of gene clusters for the production of different capsular polysaccharides in Staphylococcus aureus.</title>
        <authorList>
            <person name="Sau S."/>
            <person name="Lee C.Y."/>
        </authorList>
    </citation>
    <scope>NUCLEOTIDE SEQUENCE [GENOMIC DNA]</scope>
    <source>
        <strain>Becker</strain>
    </source>
</reference>
<reference key="2">
    <citation type="journal article" date="1997" name="J. Bacteriol.">
        <title>Molecular characterization and transcriptional analysis of type 8 capsule genes in Staphylococcus aureus.</title>
        <authorList>
            <person name="Sau S."/>
            <person name="Sun J."/>
            <person name="Lee C.Y."/>
        </authorList>
    </citation>
    <scope>NUCLEOTIDE SEQUENCE [GENOMIC DNA]</scope>
    <source>
        <strain>Becker</strain>
    </source>
</reference>
<reference key="3">
    <citation type="journal article" date="1997" name="Microbiology">
        <title>The Staphylococcus aureus allelic genetic loci for serotype 5 and 8 capsule expression contain the type-specific genes flanked by common genes.</title>
        <authorList>
            <person name="Sau S."/>
            <person name="Bhasin N."/>
            <person name="Wann E.R."/>
            <person name="Lee J.C."/>
            <person name="Foster T.J."/>
            <person name="Lee C.Y."/>
        </authorList>
    </citation>
    <scope>FUNCTION</scope>
    <source>
        <strain>Becker</strain>
    </source>
</reference>
<proteinExistence type="evidence at protein level"/>
<dbReference type="EMBL" id="U73374">
    <property type="protein sequence ID" value="AAB49430.1"/>
    <property type="molecule type" value="Genomic_DNA"/>
</dbReference>
<dbReference type="PDB" id="3BFV">
    <property type="method" value="X-ray"/>
    <property type="resolution" value="1.80 A"/>
    <property type="chains" value="A/B=194-222"/>
</dbReference>
<dbReference type="PDBsum" id="3BFV"/>
<dbReference type="SMR" id="P72367"/>
<dbReference type="TCDB" id="8.A.3.2.4">
    <property type="family name" value="the cytoplasmic membrane-periplasmic auxiliary-1 (mpa1) protein with cytoplasmic (c) domain (mpa1-c or mpa1+c) family"/>
</dbReference>
<dbReference type="GO" id="GO:0005886">
    <property type="term" value="C:plasma membrane"/>
    <property type="evidence" value="ECO:0007669"/>
    <property type="project" value="UniProtKB-SubCell"/>
</dbReference>
<dbReference type="GO" id="GO:0005351">
    <property type="term" value="F:carbohydrate:proton symporter activity"/>
    <property type="evidence" value="ECO:0007669"/>
    <property type="project" value="InterPro"/>
</dbReference>
<dbReference type="GO" id="GO:0004713">
    <property type="term" value="F:protein tyrosine kinase activity"/>
    <property type="evidence" value="ECO:0007669"/>
    <property type="project" value="TreeGrafter"/>
</dbReference>
<dbReference type="GO" id="GO:0000271">
    <property type="term" value="P:polysaccharide biosynthetic process"/>
    <property type="evidence" value="ECO:0007669"/>
    <property type="project" value="UniProtKB-KW"/>
</dbReference>
<dbReference type="GO" id="GO:0015774">
    <property type="term" value="P:polysaccharide transport"/>
    <property type="evidence" value="ECO:0007669"/>
    <property type="project" value="InterPro"/>
</dbReference>
<dbReference type="InterPro" id="IPR050445">
    <property type="entry name" value="Bact_polysacc_biosynth/exp"/>
</dbReference>
<dbReference type="InterPro" id="IPR005701">
    <property type="entry name" value="CpsC-like"/>
</dbReference>
<dbReference type="InterPro" id="IPR003856">
    <property type="entry name" value="LPS_length_determ_N_term"/>
</dbReference>
<dbReference type="NCBIfam" id="TIGR01006">
    <property type="entry name" value="polys_exp_MPA1"/>
    <property type="match status" value="1"/>
</dbReference>
<dbReference type="PANTHER" id="PTHR32309:SF13">
    <property type="entry name" value="FERRIC ENTEROBACTIN TRANSPORT PROTEIN FEPE"/>
    <property type="match status" value="1"/>
</dbReference>
<dbReference type="PANTHER" id="PTHR32309">
    <property type="entry name" value="TYROSINE-PROTEIN KINASE"/>
    <property type="match status" value="1"/>
</dbReference>
<dbReference type="Pfam" id="PF02706">
    <property type="entry name" value="Wzz"/>
    <property type="match status" value="1"/>
</dbReference>